<reference key="1">
    <citation type="journal article" date="2001" name="J. Bacteriol.">
        <title>Genome sequence and comparative analysis of the solvent-producing bacterium Clostridium acetobutylicum.</title>
        <authorList>
            <person name="Noelling J."/>
            <person name="Breton G."/>
            <person name="Omelchenko M.V."/>
            <person name="Makarova K.S."/>
            <person name="Zeng Q."/>
            <person name="Gibson R."/>
            <person name="Lee H.M."/>
            <person name="Dubois J."/>
            <person name="Qiu D."/>
            <person name="Hitti J."/>
            <person name="Wolf Y.I."/>
            <person name="Tatusov R.L."/>
            <person name="Sabathe F."/>
            <person name="Doucette-Stamm L.A."/>
            <person name="Soucaille P."/>
            <person name="Daly M.J."/>
            <person name="Bennett G.N."/>
            <person name="Koonin E.V."/>
            <person name="Smith D.R."/>
        </authorList>
    </citation>
    <scope>NUCLEOTIDE SEQUENCE [LARGE SCALE GENOMIC DNA]</scope>
    <source>
        <strain>ATCC 824 / DSM 792 / JCM 1419 / IAM 19013 / LMG 5710 / NBRC 13948 / NRRL B-527 / VKM B-1787 / 2291 / W</strain>
    </source>
</reference>
<name>PYRC_CLOAB</name>
<gene>
    <name evidence="1" type="primary">pyrC</name>
    <name type="ordered locus">CA_C0519</name>
</gene>
<accession>Q97LN7</accession>
<keyword id="KW-0378">Hydrolase</keyword>
<keyword id="KW-0479">Metal-binding</keyword>
<keyword id="KW-0665">Pyrimidine biosynthesis</keyword>
<keyword id="KW-1185">Reference proteome</keyword>
<keyword id="KW-0862">Zinc</keyword>
<proteinExistence type="inferred from homology"/>
<comment type="function">
    <text evidence="1">Catalyzes the reversible cyclization of carbamoyl aspartate to dihydroorotate.</text>
</comment>
<comment type="catalytic activity">
    <reaction evidence="1">
        <text>(S)-dihydroorotate + H2O = N-carbamoyl-L-aspartate + H(+)</text>
        <dbReference type="Rhea" id="RHEA:24296"/>
        <dbReference type="ChEBI" id="CHEBI:15377"/>
        <dbReference type="ChEBI" id="CHEBI:15378"/>
        <dbReference type="ChEBI" id="CHEBI:30864"/>
        <dbReference type="ChEBI" id="CHEBI:32814"/>
        <dbReference type="EC" id="3.5.2.3"/>
    </reaction>
</comment>
<comment type="cofactor">
    <cofactor evidence="1">
        <name>Zn(2+)</name>
        <dbReference type="ChEBI" id="CHEBI:29105"/>
    </cofactor>
    <text evidence="1">Binds 2 Zn(2+) ions per subunit.</text>
</comment>
<comment type="pathway">
    <text evidence="1">Pyrimidine metabolism; UMP biosynthesis via de novo pathway; (S)-dihydroorotate from bicarbonate: step 3/3.</text>
</comment>
<comment type="similarity">
    <text evidence="1">Belongs to the metallo-dependent hydrolases superfamily. DHOase family. Class I DHOase subfamily.</text>
</comment>
<evidence type="ECO:0000255" key="1">
    <source>
        <dbReference type="HAMAP-Rule" id="MF_00220"/>
    </source>
</evidence>
<protein>
    <recommendedName>
        <fullName evidence="1">Dihydroorotase</fullName>
        <shortName evidence="1">DHOase</shortName>
        <ecNumber evidence="1">3.5.2.3</ecNumber>
    </recommendedName>
</protein>
<feature type="chain" id="PRO_0000147231" description="Dihydroorotase">
    <location>
        <begin position="1"/>
        <end position="424"/>
    </location>
</feature>
<feature type="active site" evidence="1">
    <location>
        <position position="304"/>
    </location>
</feature>
<feature type="binding site" evidence="1">
    <location>
        <position position="60"/>
    </location>
    <ligand>
        <name>Zn(2+)</name>
        <dbReference type="ChEBI" id="CHEBI:29105"/>
        <label>1</label>
    </ligand>
</feature>
<feature type="binding site" evidence="1">
    <location>
        <begin position="62"/>
        <end position="64"/>
    </location>
    <ligand>
        <name>substrate</name>
    </ligand>
</feature>
<feature type="binding site" evidence="1">
    <location>
        <position position="62"/>
    </location>
    <ligand>
        <name>Zn(2+)</name>
        <dbReference type="ChEBI" id="CHEBI:29105"/>
        <label>1</label>
    </ligand>
</feature>
<feature type="binding site" evidence="1">
    <location>
        <position position="94"/>
    </location>
    <ligand>
        <name>substrate</name>
    </ligand>
</feature>
<feature type="binding site" evidence="1">
    <location>
        <position position="151"/>
    </location>
    <ligand>
        <name>Zn(2+)</name>
        <dbReference type="ChEBI" id="CHEBI:29105"/>
        <label>1</label>
    </ligand>
</feature>
<feature type="binding site" evidence="1">
    <location>
        <position position="151"/>
    </location>
    <ligand>
        <name>Zn(2+)</name>
        <dbReference type="ChEBI" id="CHEBI:29105"/>
        <label>2</label>
    </ligand>
</feature>
<feature type="binding site" evidence="1">
    <location>
        <position position="178"/>
    </location>
    <ligand>
        <name>Zn(2+)</name>
        <dbReference type="ChEBI" id="CHEBI:29105"/>
        <label>2</label>
    </ligand>
</feature>
<feature type="binding site" evidence="1">
    <location>
        <position position="231"/>
    </location>
    <ligand>
        <name>Zn(2+)</name>
        <dbReference type="ChEBI" id="CHEBI:29105"/>
        <label>2</label>
    </ligand>
</feature>
<feature type="binding site" evidence="1">
    <location>
        <position position="277"/>
    </location>
    <ligand>
        <name>substrate</name>
    </ligand>
</feature>
<feature type="binding site" evidence="1">
    <location>
        <position position="304"/>
    </location>
    <ligand>
        <name>Zn(2+)</name>
        <dbReference type="ChEBI" id="CHEBI:29105"/>
        <label>1</label>
    </ligand>
</feature>
<feature type="binding site" evidence="1">
    <location>
        <position position="308"/>
    </location>
    <ligand>
        <name>substrate</name>
    </ligand>
</feature>
<organism>
    <name type="scientific">Clostridium acetobutylicum (strain ATCC 824 / DSM 792 / JCM 1419 / IAM 19013 / LMG 5710 / NBRC 13948 / NRRL B-527 / VKM B-1787 / 2291 / W)</name>
    <dbReference type="NCBI Taxonomy" id="272562"/>
    <lineage>
        <taxon>Bacteria</taxon>
        <taxon>Bacillati</taxon>
        <taxon>Bacillota</taxon>
        <taxon>Clostridia</taxon>
        <taxon>Eubacteriales</taxon>
        <taxon>Clostridiaceae</taxon>
        <taxon>Clostridium</taxon>
    </lineage>
</organism>
<sequence length="424" mass="46528">MIIIKNGYVIDPLTKREGKFDILIDGENVVRISQDIGIDDDIEVIDAEDCIVSPGFIDIHSHFRDPGFTEKEDIITGARAAARGGYTTVICMANTNPVVDNVETLRYIVDKAKTAKIEVLQVGTITKGMQGVELVDMEALKEAGAVGFSDDGKPIMDSRLVLEAMQKARELDVPLSFHEEDPKLVYESGINGGKVAEKLNMMGALEEAETVLTARDAALAVSSGAKTNIQHISSKISLGIIKLAKEMGANIIAEATPQHFSITEEEILNCGTNAKVNPPLRREDDRKAIVAALKDDTIQVIATDHAPHTKDEKAREFKEAPSGMIGLETALSLAVTNLVKTGDLTYRDMISKLTINPARFYNLDRGYIKEGHRADIVIFDPDEKYTVKEEEFQSKASNSPFIGKELFGKVKTTIYNGKIVYEDK</sequence>
<dbReference type="EC" id="3.5.2.3" evidence="1"/>
<dbReference type="EMBL" id="AE001437">
    <property type="protein sequence ID" value="AAK78499.1"/>
    <property type="molecule type" value="Genomic_DNA"/>
</dbReference>
<dbReference type="PIR" id="H96963">
    <property type="entry name" value="H96963"/>
</dbReference>
<dbReference type="RefSeq" id="NP_347159.1">
    <property type="nucleotide sequence ID" value="NC_003030.1"/>
</dbReference>
<dbReference type="RefSeq" id="WP_010963841.1">
    <property type="nucleotide sequence ID" value="NC_003030.1"/>
</dbReference>
<dbReference type="SMR" id="Q97LN7"/>
<dbReference type="STRING" id="272562.CA_C0519"/>
<dbReference type="KEGG" id="cac:CA_C0519"/>
<dbReference type="PATRIC" id="fig|272562.8.peg.718"/>
<dbReference type="eggNOG" id="COG0044">
    <property type="taxonomic scope" value="Bacteria"/>
</dbReference>
<dbReference type="HOGENOM" id="CLU_015572_1_0_9"/>
<dbReference type="OrthoDB" id="9765462at2"/>
<dbReference type="UniPathway" id="UPA00070">
    <property type="reaction ID" value="UER00117"/>
</dbReference>
<dbReference type="PRO" id="PR:Q97LN7"/>
<dbReference type="Proteomes" id="UP000000814">
    <property type="component" value="Chromosome"/>
</dbReference>
<dbReference type="GO" id="GO:0005737">
    <property type="term" value="C:cytoplasm"/>
    <property type="evidence" value="ECO:0007669"/>
    <property type="project" value="TreeGrafter"/>
</dbReference>
<dbReference type="GO" id="GO:0004038">
    <property type="term" value="F:allantoinase activity"/>
    <property type="evidence" value="ECO:0007669"/>
    <property type="project" value="TreeGrafter"/>
</dbReference>
<dbReference type="GO" id="GO:0004151">
    <property type="term" value="F:dihydroorotase activity"/>
    <property type="evidence" value="ECO:0007669"/>
    <property type="project" value="UniProtKB-UniRule"/>
</dbReference>
<dbReference type="GO" id="GO:0008270">
    <property type="term" value="F:zinc ion binding"/>
    <property type="evidence" value="ECO:0007669"/>
    <property type="project" value="UniProtKB-UniRule"/>
</dbReference>
<dbReference type="GO" id="GO:0044205">
    <property type="term" value="P:'de novo' UMP biosynthetic process"/>
    <property type="evidence" value="ECO:0007669"/>
    <property type="project" value="UniProtKB-UniRule"/>
</dbReference>
<dbReference type="GO" id="GO:0006145">
    <property type="term" value="P:purine nucleobase catabolic process"/>
    <property type="evidence" value="ECO:0007669"/>
    <property type="project" value="TreeGrafter"/>
</dbReference>
<dbReference type="CDD" id="cd01317">
    <property type="entry name" value="DHOase_IIa"/>
    <property type="match status" value="1"/>
</dbReference>
<dbReference type="Gene3D" id="3.20.20.140">
    <property type="entry name" value="Metal-dependent hydrolases"/>
    <property type="match status" value="1"/>
</dbReference>
<dbReference type="Gene3D" id="2.30.40.10">
    <property type="entry name" value="Urease, subunit C, domain 1"/>
    <property type="match status" value="1"/>
</dbReference>
<dbReference type="HAMAP" id="MF_00220_B">
    <property type="entry name" value="PyrC_classI_B"/>
    <property type="match status" value="1"/>
</dbReference>
<dbReference type="InterPro" id="IPR006680">
    <property type="entry name" value="Amidohydro-rel"/>
</dbReference>
<dbReference type="InterPro" id="IPR004722">
    <property type="entry name" value="DHOase"/>
</dbReference>
<dbReference type="InterPro" id="IPR050138">
    <property type="entry name" value="DHOase/Allantoinase_Hydrolase"/>
</dbReference>
<dbReference type="InterPro" id="IPR002195">
    <property type="entry name" value="Dihydroorotase_CS"/>
</dbReference>
<dbReference type="InterPro" id="IPR011059">
    <property type="entry name" value="Metal-dep_hydrolase_composite"/>
</dbReference>
<dbReference type="InterPro" id="IPR032466">
    <property type="entry name" value="Metal_Hydrolase"/>
</dbReference>
<dbReference type="NCBIfam" id="NF006839">
    <property type="entry name" value="PRK09357.1-4"/>
    <property type="match status" value="1"/>
</dbReference>
<dbReference type="NCBIfam" id="TIGR00857">
    <property type="entry name" value="pyrC_multi"/>
    <property type="match status" value="1"/>
</dbReference>
<dbReference type="PANTHER" id="PTHR43668">
    <property type="entry name" value="ALLANTOINASE"/>
    <property type="match status" value="1"/>
</dbReference>
<dbReference type="PANTHER" id="PTHR43668:SF2">
    <property type="entry name" value="ALLANTOINASE"/>
    <property type="match status" value="1"/>
</dbReference>
<dbReference type="Pfam" id="PF01979">
    <property type="entry name" value="Amidohydro_1"/>
    <property type="match status" value="1"/>
</dbReference>
<dbReference type="SUPFAM" id="SSF51338">
    <property type="entry name" value="Composite domain of metallo-dependent hydrolases"/>
    <property type="match status" value="1"/>
</dbReference>
<dbReference type="SUPFAM" id="SSF51556">
    <property type="entry name" value="Metallo-dependent hydrolases"/>
    <property type="match status" value="1"/>
</dbReference>
<dbReference type="PROSITE" id="PS00483">
    <property type="entry name" value="DIHYDROOROTASE_2"/>
    <property type="match status" value="1"/>
</dbReference>